<gene>
    <name type="primary">AHCY</name>
</gene>
<comment type="function">
    <text evidence="1 3">Catalyzes the hydrolysis of S-adenosyl-L-homocysteine to form adenosine and homocysteine (By similarity). Binds copper ions (By similarity).</text>
</comment>
<comment type="catalytic activity">
    <reaction evidence="1">
        <text>S-adenosyl-L-homocysteine + H2O = L-homocysteine + adenosine</text>
        <dbReference type="Rhea" id="RHEA:21708"/>
        <dbReference type="ChEBI" id="CHEBI:15377"/>
        <dbReference type="ChEBI" id="CHEBI:16335"/>
        <dbReference type="ChEBI" id="CHEBI:57856"/>
        <dbReference type="ChEBI" id="CHEBI:58199"/>
        <dbReference type="EC" id="3.13.2.1"/>
    </reaction>
    <physiologicalReaction direction="left-to-right" evidence="1">
        <dbReference type="Rhea" id="RHEA:21709"/>
    </physiologicalReaction>
</comment>
<comment type="cofactor">
    <cofactor evidence="1">
        <name>NAD(+)</name>
        <dbReference type="ChEBI" id="CHEBI:57540"/>
    </cofactor>
    <text evidence="1">Binds 1 NAD(+) per subunit.</text>
</comment>
<comment type="pathway">
    <text>Amino-acid biosynthesis; L-homocysteine biosynthesis; L-homocysteine from S-adenosyl-L-homocysteine: step 1/1.</text>
</comment>
<comment type="subunit">
    <text evidence="1 2">Homotetramer. Interaction with AHCYL1 (By similarity).</text>
</comment>
<comment type="subcellular location">
    <subcellularLocation>
        <location evidence="2">Cytoplasm</location>
    </subcellularLocation>
    <subcellularLocation>
        <location evidence="2">Melanosome</location>
    </subcellularLocation>
    <subcellularLocation>
        <location evidence="2">Nucleus</location>
    </subcellularLocation>
    <subcellularLocation>
        <location evidence="2">Endoplasmic reticulum</location>
    </subcellularLocation>
</comment>
<comment type="similarity">
    <text evidence="4">Belongs to the adenosylhomocysteinase family.</text>
</comment>
<evidence type="ECO:0000250" key="1">
    <source>
        <dbReference type="UniProtKB" id="P10760"/>
    </source>
</evidence>
<evidence type="ECO:0000250" key="2">
    <source>
        <dbReference type="UniProtKB" id="P23526"/>
    </source>
</evidence>
<evidence type="ECO:0000250" key="3">
    <source>
        <dbReference type="UniProtKB" id="P50247"/>
    </source>
</evidence>
<evidence type="ECO:0000305" key="4"/>
<accession>Q3MHL4</accession>
<accession>A5D9B8</accession>
<dbReference type="EC" id="3.13.2.1" evidence="1"/>
<dbReference type="EMBL" id="BT030537">
    <property type="protein sequence ID" value="ABQ12977.1"/>
    <property type="molecule type" value="mRNA"/>
</dbReference>
<dbReference type="EMBL" id="BC105194">
    <property type="protein sequence ID" value="AAI05195.1"/>
    <property type="molecule type" value="mRNA"/>
</dbReference>
<dbReference type="RefSeq" id="NP_001029487.1">
    <property type="nucleotide sequence ID" value="NM_001034315.1"/>
</dbReference>
<dbReference type="SMR" id="Q3MHL4"/>
<dbReference type="FunCoup" id="Q3MHL4">
    <property type="interactions" value="2482"/>
</dbReference>
<dbReference type="STRING" id="9913.ENSBTAP00000024092"/>
<dbReference type="PaxDb" id="9913-ENSBTAP00000024092"/>
<dbReference type="PeptideAtlas" id="Q3MHL4"/>
<dbReference type="Ensembl" id="ENSBTAT00000024092.3">
    <property type="protein sequence ID" value="ENSBTAP00000024092.2"/>
    <property type="gene ID" value="ENSBTAG00000018101.4"/>
</dbReference>
<dbReference type="GeneID" id="508158"/>
<dbReference type="KEGG" id="bta:508158"/>
<dbReference type="CTD" id="191"/>
<dbReference type="VEuPathDB" id="HostDB:ENSBTAG00000018101"/>
<dbReference type="VGNC" id="VGNC:25750">
    <property type="gene designation" value="AHCY"/>
</dbReference>
<dbReference type="eggNOG" id="KOG1370">
    <property type="taxonomic scope" value="Eukaryota"/>
</dbReference>
<dbReference type="GeneTree" id="ENSGT00950000182981"/>
<dbReference type="HOGENOM" id="CLU_025194_2_1_1"/>
<dbReference type="InParanoid" id="Q3MHL4"/>
<dbReference type="OMA" id="YIGVTVE"/>
<dbReference type="OrthoDB" id="10007170at2759"/>
<dbReference type="TreeFam" id="TF300415"/>
<dbReference type="Reactome" id="R-BTA-156581">
    <property type="pathway name" value="Methylation"/>
</dbReference>
<dbReference type="Reactome" id="R-BTA-1614635">
    <property type="pathway name" value="Sulfur amino acid metabolism"/>
</dbReference>
<dbReference type="UniPathway" id="UPA00314">
    <property type="reaction ID" value="UER00076"/>
</dbReference>
<dbReference type="Proteomes" id="UP000009136">
    <property type="component" value="Chromosome 13"/>
</dbReference>
<dbReference type="Bgee" id="ENSBTAG00000018101">
    <property type="expression patterns" value="Expressed in liver and 104 other cell types or tissues"/>
</dbReference>
<dbReference type="GO" id="GO:0005829">
    <property type="term" value="C:cytosol"/>
    <property type="evidence" value="ECO:0000250"/>
    <property type="project" value="AgBase"/>
</dbReference>
<dbReference type="GO" id="GO:0005783">
    <property type="term" value="C:endoplasmic reticulum"/>
    <property type="evidence" value="ECO:0007669"/>
    <property type="project" value="UniProtKB-SubCell"/>
</dbReference>
<dbReference type="GO" id="GO:0042470">
    <property type="term" value="C:melanosome"/>
    <property type="evidence" value="ECO:0007669"/>
    <property type="project" value="UniProtKB-SubCell"/>
</dbReference>
<dbReference type="GO" id="GO:0005634">
    <property type="term" value="C:nucleus"/>
    <property type="evidence" value="ECO:0007669"/>
    <property type="project" value="UniProtKB-SubCell"/>
</dbReference>
<dbReference type="GO" id="GO:0004013">
    <property type="term" value="F:adenosylhomocysteinase activity"/>
    <property type="evidence" value="ECO:0000250"/>
    <property type="project" value="UniProtKB"/>
</dbReference>
<dbReference type="GO" id="GO:0051287">
    <property type="term" value="F:NAD binding"/>
    <property type="evidence" value="ECO:0000250"/>
    <property type="project" value="UniProtKB"/>
</dbReference>
<dbReference type="GO" id="GO:0006730">
    <property type="term" value="P:one-carbon metabolic process"/>
    <property type="evidence" value="ECO:0007669"/>
    <property type="project" value="UniProtKB-KW"/>
</dbReference>
<dbReference type="GO" id="GO:0033353">
    <property type="term" value="P:S-adenosylmethionine cycle"/>
    <property type="evidence" value="ECO:0000318"/>
    <property type="project" value="GO_Central"/>
</dbReference>
<dbReference type="CDD" id="cd00401">
    <property type="entry name" value="SAHH"/>
    <property type="match status" value="1"/>
</dbReference>
<dbReference type="FunFam" id="3.40.50.1480:FF:000004">
    <property type="entry name" value="Adenosylhomocysteinase"/>
    <property type="match status" value="1"/>
</dbReference>
<dbReference type="FunFam" id="3.40.50.720:FF:000004">
    <property type="entry name" value="Adenosylhomocysteinase"/>
    <property type="match status" value="1"/>
</dbReference>
<dbReference type="Gene3D" id="3.40.50.1480">
    <property type="entry name" value="Adenosylhomocysteinase-like"/>
    <property type="match status" value="3"/>
</dbReference>
<dbReference type="Gene3D" id="3.40.50.720">
    <property type="entry name" value="NAD(P)-binding Rossmann-like Domain"/>
    <property type="match status" value="1"/>
</dbReference>
<dbReference type="HAMAP" id="MF_00563">
    <property type="entry name" value="AdoHcyase"/>
    <property type="match status" value="1"/>
</dbReference>
<dbReference type="InterPro" id="IPR042172">
    <property type="entry name" value="Adenosylhomocyst_ase-like_sf"/>
</dbReference>
<dbReference type="InterPro" id="IPR000043">
    <property type="entry name" value="Adenosylhomocysteinase-like"/>
</dbReference>
<dbReference type="InterPro" id="IPR015878">
    <property type="entry name" value="Ado_hCys_hydrolase_NAD-bd"/>
</dbReference>
<dbReference type="InterPro" id="IPR036291">
    <property type="entry name" value="NAD(P)-bd_dom_sf"/>
</dbReference>
<dbReference type="InterPro" id="IPR020082">
    <property type="entry name" value="S-Ado-L-homoCys_hydrolase_CS"/>
</dbReference>
<dbReference type="NCBIfam" id="TIGR00936">
    <property type="entry name" value="ahcY"/>
    <property type="match status" value="1"/>
</dbReference>
<dbReference type="NCBIfam" id="NF004005">
    <property type="entry name" value="PRK05476.2-3"/>
    <property type="match status" value="1"/>
</dbReference>
<dbReference type="PANTHER" id="PTHR23420">
    <property type="entry name" value="ADENOSYLHOMOCYSTEINASE"/>
    <property type="match status" value="1"/>
</dbReference>
<dbReference type="PANTHER" id="PTHR23420:SF0">
    <property type="entry name" value="ADENOSYLHOMOCYSTEINASE"/>
    <property type="match status" value="1"/>
</dbReference>
<dbReference type="Pfam" id="PF05221">
    <property type="entry name" value="AdoHcyase"/>
    <property type="match status" value="1"/>
</dbReference>
<dbReference type="Pfam" id="PF00670">
    <property type="entry name" value="AdoHcyase_NAD"/>
    <property type="match status" value="1"/>
</dbReference>
<dbReference type="PIRSF" id="PIRSF001109">
    <property type="entry name" value="Ad_hcy_hydrolase"/>
    <property type="match status" value="1"/>
</dbReference>
<dbReference type="SMART" id="SM00996">
    <property type="entry name" value="AdoHcyase"/>
    <property type="match status" value="1"/>
</dbReference>
<dbReference type="SMART" id="SM00997">
    <property type="entry name" value="AdoHcyase_NAD"/>
    <property type="match status" value="1"/>
</dbReference>
<dbReference type="SUPFAM" id="SSF52283">
    <property type="entry name" value="Formate/glycerate dehydrogenase catalytic domain-like"/>
    <property type="match status" value="1"/>
</dbReference>
<dbReference type="SUPFAM" id="SSF51735">
    <property type="entry name" value="NAD(P)-binding Rossmann-fold domains"/>
    <property type="match status" value="1"/>
</dbReference>
<dbReference type="PROSITE" id="PS00738">
    <property type="entry name" value="ADOHCYASE_1"/>
    <property type="match status" value="1"/>
</dbReference>
<dbReference type="PROSITE" id="PS00739">
    <property type="entry name" value="ADOHCYASE_2"/>
    <property type="match status" value="1"/>
</dbReference>
<protein>
    <recommendedName>
        <fullName>Adenosylhomocysteinase</fullName>
        <shortName>AdoHcyase</shortName>
        <ecNumber evidence="1">3.13.2.1</ecNumber>
    </recommendedName>
    <alternativeName>
        <fullName>S-adenosyl-L-homocysteine hydrolase</fullName>
    </alternativeName>
</protein>
<feature type="initiator methionine" description="Removed" evidence="2">
    <location>
        <position position="1"/>
    </location>
</feature>
<feature type="chain" id="PRO_0000260217" description="Adenosylhomocysteinase">
    <location>
        <begin position="2"/>
        <end position="432"/>
    </location>
</feature>
<feature type="region of interest" description="NAD binding" evidence="1">
    <location>
        <begin position="183"/>
        <end position="350"/>
    </location>
</feature>
<feature type="binding site" evidence="1">
    <location>
        <position position="57"/>
    </location>
    <ligand>
        <name>substrate</name>
    </ligand>
</feature>
<feature type="binding site" evidence="1">
    <location>
        <position position="131"/>
    </location>
    <ligand>
        <name>substrate</name>
    </ligand>
</feature>
<feature type="binding site" evidence="1">
    <location>
        <position position="156"/>
    </location>
    <ligand>
        <name>substrate</name>
    </ligand>
</feature>
<feature type="binding site" evidence="1">
    <location>
        <position position="186"/>
    </location>
    <ligand>
        <name>substrate</name>
    </ligand>
</feature>
<feature type="binding site" evidence="1">
    <location>
        <position position="190"/>
    </location>
    <ligand>
        <name>substrate</name>
    </ligand>
</feature>
<feature type="modified residue" description="N-acetylserine" evidence="2">
    <location>
        <position position="2"/>
    </location>
</feature>
<feature type="modified residue" description="Phosphoserine" evidence="2">
    <location>
        <position position="183"/>
    </location>
</feature>
<feature type="modified residue" description="N6-(2-hydroxyisobutyryl)lysine" evidence="2">
    <location>
        <position position="186"/>
    </location>
</feature>
<feature type="modified residue" description="Phosphotyrosine" evidence="3">
    <location>
        <position position="193"/>
    </location>
</feature>
<reference key="1">
    <citation type="journal article" date="2005" name="BMC Genomics">
        <title>Characterization of 954 bovine full-CDS cDNA sequences.</title>
        <authorList>
            <person name="Harhay G.P."/>
            <person name="Sonstegard T.S."/>
            <person name="Keele J.W."/>
            <person name="Heaton M.P."/>
            <person name="Clawson M.L."/>
            <person name="Snelling W.M."/>
            <person name="Wiedmann R.T."/>
            <person name="Van Tassell C.P."/>
            <person name="Smith T.P.L."/>
        </authorList>
    </citation>
    <scope>NUCLEOTIDE SEQUENCE [LARGE SCALE MRNA]</scope>
</reference>
<reference key="2">
    <citation type="submission" date="2005-09" db="EMBL/GenBank/DDBJ databases">
        <authorList>
            <consortium name="NIH - Mammalian Gene Collection (MGC) project"/>
        </authorList>
    </citation>
    <scope>NUCLEOTIDE SEQUENCE [LARGE SCALE MRNA]</scope>
    <source>
        <strain>Crossbred X Angus</strain>
        <tissue>Ileum</tissue>
    </source>
</reference>
<keyword id="KW-0007">Acetylation</keyword>
<keyword id="KW-0186">Copper</keyword>
<keyword id="KW-0963">Cytoplasm</keyword>
<keyword id="KW-0256">Endoplasmic reticulum</keyword>
<keyword id="KW-0378">Hydrolase</keyword>
<keyword id="KW-0379">Hydroxylation</keyword>
<keyword id="KW-0520">NAD</keyword>
<keyword id="KW-0539">Nucleus</keyword>
<keyword id="KW-0554">One-carbon metabolism</keyword>
<keyword id="KW-0597">Phosphoprotein</keyword>
<keyword id="KW-1185">Reference proteome</keyword>
<sequence>MSDKLPYKVADISLAAWGRKALDLAENEMPGLMHMREMYSASKPLKGARIAGCLHMTVETAVLIETLVALGAEVRWSSCNIFSTQDHAAAAIAKAGIPVYAWKGETDEEYLWCIEQTLYFKDGPLNMILDDGGDLTNLIHTKYPQLLSGIRGISEETTTGVHNLYKMMAKGILKVPAINVNDSVTKSKFDNLYGCRESLIDGIKRATDVMIAGKVAVVAGYGDVGKGCAQALRGFGARVIITEIDPINALQAAMEGYEVTTMDEACQEGNIFVTTTGCTDIILGQHFEQMKDDAIVCNIGHFDVEIDVKWLNENAVEKVNIKPQVDRYLLKNGRRIILLAEGRLVNLGCAMGHPSFVMSNSFTNQVLAQIELWTHPDKYPVGVHFLPKKLDEAVAEAHLGKLNVKLTKLTEKQAQYLGVSREGPFKPDHYRY</sequence>
<name>SAHH_BOVIN</name>
<organism>
    <name type="scientific">Bos taurus</name>
    <name type="common">Bovine</name>
    <dbReference type="NCBI Taxonomy" id="9913"/>
    <lineage>
        <taxon>Eukaryota</taxon>
        <taxon>Metazoa</taxon>
        <taxon>Chordata</taxon>
        <taxon>Craniata</taxon>
        <taxon>Vertebrata</taxon>
        <taxon>Euteleostomi</taxon>
        <taxon>Mammalia</taxon>
        <taxon>Eutheria</taxon>
        <taxon>Laurasiatheria</taxon>
        <taxon>Artiodactyla</taxon>
        <taxon>Ruminantia</taxon>
        <taxon>Pecora</taxon>
        <taxon>Bovidae</taxon>
        <taxon>Bovinae</taxon>
        <taxon>Bos</taxon>
    </lineage>
</organism>
<proteinExistence type="evidence at transcript level"/>